<feature type="chain" id="PRO_0000355881" description="Large ribosomal subunit protein uL14c">
    <location>
        <begin position="1"/>
        <end position="122"/>
    </location>
</feature>
<comment type="function">
    <text evidence="1">Binds to 23S rRNA.</text>
</comment>
<comment type="subunit">
    <text evidence="1">Part of the 50S ribosomal subunit.</text>
</comment>
<comment type="subcellular location">
    <subcellularLocation>
        <location>Plastid</location>
        <location>Chloroplast</location>
    </subcellularLocation>
</comment>
<comment type="similarity">
    <text evidence="1">Belongs to the universal ribosomal protein uL14 family.</text>
</comment>
<keyword id="KW-0150">Chloroplast</keyword>
<keyword id="KW-0934">Plastid</keyword>
<keyword id="KW-0687">Ribonucleoprotein</keyword>
<keyword id="KW-0689">Ribosomal protein</keyword>
<keyword id="KW-0694">RNA-binding</keyword>
<keyword id="KW-0699">rRNA-binding</keyword>
<dbReference type="EMBL" id="EU549769">
    <property type="protein sequence ID" value="ACB86563.1"/>
    <property type="molecule type" value="Genomic_DNA"/>
</dbReference>
<dbReference type="RefSeq" id="YP_001837397.1">
    <property type="nucleotide sequence ID" value="NC_010601.1"/>
</dbReference>
<dbReference type="SMR" id="B2LMN0"/>
<dbReference type="GeneID" id="6219209"/>
<dbReference type="GO" id="GO:0009507">
    <property type="term" value="C:chloroplast"/>
    <property type="evidence" value="ECO:0007669"/>
    <property type="project" value="UniProtKB-SubCell"/>
</dbReference>
<dbReference type="GO" id="GO:0022625">
    <property type="term" value="C:cytosolic large ribosomal subunit"/>
    <property type="evidence" value="ECO:0007669"/>
    <property type="project" value="TreeGrafter"/>
</dbReference>
<dbReference type="GO" id="GO:0070180">
    <property type="term" value="F:large ribosomal subunit rRNA binding"/>
    <property type="evidence" value="ECO:0007669"/>
    <property type="project" value="TreeGrafter"/>
</dbReference>
<dbReference type="GO" id="GO:0003735">
    <property type="term" value="F:structural constituent of ribosome"/>
    <property type="evidence" value="ECO:0007669"/>
    <property type="project" value="InterPro"/>
</dbReference>
<dbReference type="GO" id="GO:0006412">
    <property type="term" value="P:translation"/>
    <property type="evidence" value="ECO:0007669"/>
    <property type="project" value="UniProtKB-UniRule"/>
</dbReference>
<dbReference type="CDD" id="cd00337">
    <property type="entry name" value="Ribosomal_uL14"/>
    <property type="match status" value="1"/>
</dbReference>
<dbReference type="FunFam" id="2.40.150.20:FF:000002">
    <property type="entry name" value="50S ribosomal protein L14, chloroplastic"/>
    <property type="match status" value="1"/>
</dbReference>
<dbReference type="Gene3D" id="2.40.150.20">
    <property type="entry name" value="Ribosomal protein L14"/>
    <property type="match status" value="1"/>
</dbReference>
<dbReference type="HAMAP" id="MF_01367">
    <property type="entry name" value="Ribosomal_uL14"/>
    <property type="match status" value="1"/>
</dbReference>
<dbReference type="InterPro" id="IPR000218">
    <property type="entry name" value="Ribosomal_uL14"/>
</dbReference>
<dbReference type="InterPro" id="IPR005745">
    <property type="entry name" value="Ribosomal_uL14_bac-type"/>
</dbReference>
<dbReference type="InterPro" id="IPR019972">
    <property type="entry name" value="Ribosomal_uL14_CS"/>
</dbReference>
<dbReference type="InterPro" id="IPR036853">
    <property type="entry name" value="Ribosomal_uL14_sf"/>
</dbReference>
<dbReference type="NCBIfam" id="TIGR01067">
    <property type="entry name" value="rplN_bact"/>
    <property type="match status" value="1"/>
</dbReference>
<dbReference type="PANTHER" id="PTHR11761">
    <property type="entry name" value="50S/60S RIBOSOMAL PROTEIN L14/L23"/>
    <property type="match status" value="1"/>
</dbReference>
<dbReference type="PANTHER" id="PTHR11761:SF3">
    <property type="entry name" value="LARGE RIBOSOMAL SUBUNIT PROTEIN UL14M"/>
    <property type="match status" value="1"/>
</dbReference>
<dbReference type="Pfam" id="PF00238">
    <property type="entry name" value="Ribosomal_L14"/>
    <property type="match status" value="1"/>
</dbReference>
<dbReference type="SMART" id="SM01374">
    <property type="entry name" value="Ribosomal_L14"/>
    <property type="match status" value="1"/>
</dbReference>
<dbReference type="SUPFAM" id="SSF50193">
    <property type="entry name" value="Ribosomal protein L14"/>
    <property type="match status" value="1"/>
</dbReference>
<dbReference type="PROSITE" id="PS00049">
    <property type="entry name" value="RIBOSOMAL_L14"/>
    <property type="match status" value="1"/>
</dbReference>
<proteinExistence type="inferred from homology"/>
<gene>
    <name evidence="1" type="primary">rpl14</name>
    <name type="ordered locus">GuabCp059</name>
</gene>
<reference key="1">
    <citation type="submission" date="2008-03" db="EMBL/GenBank/DDBJ databases">
        <title>Guizotia abyssinica chloroplast sequenced using Solexa.</title>
        <authorList>
            <person name="Kane N.C."/>
            <person name="Dempewolf H."/>
            <person name="Stewart M.L."/>
            <person name="Cronk Q."/>
            <person name="Rieseberrg L.H."/>
        </authorList>
    </citation>
    <scope>NUCLEOTIDE SEQUENCE [LARGE SCALE GENOMIC DNA]</scope>
    <source>
        <strain>cv. PI 508077</strain>
    </source>
</reference>
<name>RK14_GUIAB</name>
<sequence>MIQPQTHLNVADNSGARELMCIRIIGASHRRYAHIGDVIVAVIKDAVPNMPLERSEVVRAVIVRTCKELKRDNGMIIRYDDNAAVVIDQEGNPKGTRVFGAIARELRQFNFTKIVSLAPEVL</sequence>
<organism>
    <name type="scientific">Guizotia abyssinica</name>
    <name type="common">Niger</name>
    <name type="synonym">Ramtilla</name>
    <dbReference type="NCBI Taxonomy" id="4230"/>
    <lineage>
        <taxon>Eukaryota</taxon>
        <taxon>Viridiplantae</taxon>
        <taxon>Streptophyta</taxon>
        <taxon>Embryophyta</taxon>
        <taxon>Tracheophyta</taxon>
        <taxon>Spermatophyta</taxon>
        <taxon>Magnoliopsida</taxon>
        <taxon>eudicotyledons</taxon>
        <taxon>Gunneridae</taxon>
        <taxon>Pentapetalae</taxon>
        <taxon>asterids</taxon>
        <taxon>campanulids</taxon>
        <taxon>Asterales</taxon>
        <taxon>Asteraceae</taxon>
        <taxon>Asteroideae</taxon>
        <taxon>Heliantheae alliance</taxon>
        <taxon>Millerieae</taxon>
        <taxon>Guizotia</taxon>
    </lineage>
</organism>
<geneLocation type="chloroplast"/>
<accession>B2LMN0</accession>
<protein>
    <recommendedName>
        <fullName evidence="1">Large ribosomal subunit protein uL14c</fullName>
    </recommendedName>
    <alternativeName>
        <fullName evidence="2">50S ribosomal protein L14, chloroplastic</fullName>
    </alternativeName>
</protein>
<evidence type="ECO:0000255" key="1">
    <source>
        <dbReference type="HAMAP-Rule" id="MF_01367"/>
    </source>
</evidence>
<evidence type="ECO:0000305" key="2"/>